<evidence type="ECO:0000250" key="1"/>
<evidence type="ECO:0000255" key="2">
    <source>
        <dbReference type="HAMAP-Rule" id="MF_00100"/>
    </source>
</evidence>
<evidence type="ECO:0000256" key="3">
    <source>
        <dbReference type="SAM" id="MobiDB-lite"/>
    </source>
</evidence>
<gene>
    <name evidence="2" type="primary">infB</name>
    <name type="ordered locus">YPTB0480</name>
</gene>
<dbReference type="EMBL" id="BX936398">
    <property type="protein sequence ID" value="CAH19720.1"/>
    <property type="molecule type" value="Genomic_DNA"/>
</dbReference>
<dbReference type="RefSeq" id="WP_002223151.1">
    <property type="nucleotide sequence ID" value="NZ_CP009712.1"/>
</dbReference>
<dbReference type="SMR" id="Q66F60"/>
<dbReference type="GeneID" id="49787518"/>
<dbReference type="KEGG" id="ypo:BZ17_2083"/>
<dbReference type="KEGG" id="yps:YPTB0480"/>
<dbReference type="PATRIC" id="fig|273123.14.peg.2211"/>
<dbReference type="Proteomes" id="UP000001011">
    <property type="component" value="Chromosome"/>
</dbReference>
<dbReference type="GO" id="GO:0005829">
    <property type="term" value="C:cytosol"/>
    <property type="evidence" value="ECO:0007669"/>
    <property type="project" value="TreeGrafter"/>
</dbReference>
<dbReference type="GO" id="GO:0005525">
    <property type="term" value="F:GTP binding"/>
    <property type="evidence" value="ECO:0007669"/>
    <property type="project" value="UniProtKB-KW"/>
</dbReference>
<dbReference type="GO" id="GO:0003924">
    <property type="term" value="F:GTPase activity"/>
    <property type="evidence" value="ECO:0007669"/>
    <property type="project" value="UniProtKB-UniRule"/>
</dbReference>
<dbReference type="GO" id="GO:0097216">
    <property type="term" value="F:guanosine tetraphosphate binding"/>
    <property type="evidence" value="ECO:0007669"/>
    <property type="project" value="UniProtKB-ARBA"/>
</dbReference>
<dbReference type="GO" id="GO:0003743">
    <property type="term" value="F:translation initiation factor activity"/>
    <property type="evidence" value="ECO:0007669"/>
    <property type="project" value="UniProtKB-UniRule"/>
</dbReference>
<dbReference type="CDD" id="cd01887">
    <property type="entry name" value="IF2_eIF5B"/>
    <property type="match status" value="1"/>
</dbReference>
<dbReference type="CDD" id="cd03702">
    <property type="entry name" value="IF2_mtIF2_II"/>
    <property type="match status" value="1"/>
</dbReference>
<dbReference type="CDD" id="cd03692">
    <property type="entry name" value="mtIF2_IVc"/>
    <property type="match status" value="1"/>
</dbReference>
<dbReference type="FunFam" id="2.40.30.10:FF:000007">
    <property type="entry name" value="Translation initiation factor IF-2"/>
    <property type="match status" value="1"/>
</dbReference>
<dbReference type="FunFam" id="2.40.30.10:FF:000008">
    <property type="entry name" value="Translation initiation factor IF-2"/>
    <property type="match status" value="1"/>
</dbReference>
<dbReference type="FunFam" id="3.30.56.50:FF:000001">
    <property type="entry name" value="Translation initiation factor IF-2"/>
    <property type="match status" value="1"/>
</dbReference>
<dbReference type="FunFam" id="3.40.50.10050:FF:000001">
    <property type="entry name" value="Translation initiation factor IF-2"/>
    <property type="match status" value="1"/>
</dbReference>
<dbReference type="FunFam" id="3.40.50.300:FF:000019">
    <property type="entry name" value="Translation initiation factor IF-2"/>
    <property type="match status" value="1"/>
</dbReference>
<dbReference type="Gene3D" id="3.40.50.300">
    <property type="entry name" value="P-loop containing nucleotide triphosphate hydrolases"/>
    <property type="match status" value="1"/>
</dbReference>
<dbReference type="Gene3D" id="3.30.56.50">
    <property type="entry name" value="Putative DNA-binding domain, N-terminal subdomain of bacterial translation initiation factor IF2"/>
    <property type="match status" value="1"/>
</dbReference>
<dbReference type="Gene3D" id="2.40.30.10">
    <property type="entry name" value="Translation factors"/>
    <property type="match status" value="2"/>
</dbReference>
<dbReference type="Gene3D" id="3.40.50.10050">
    <property type="entry name" value="Translation initiation factor IF- 2, domain 3"/>
    <property type="match status" value="1"/>
</dbReference>
<dbReference type="HAMAP" id="MF_00100_B">
    <property type="entry name" value="IF_2_B"/>
    <property type="match status" value="1"/>
</dbReference>
<dbReference type="InterPro" id="IPR009061">
    <property type="entry name" value="DNA-bd_dom_put_sf"/>
</dbReference>
<dbReference type="InterPro" id="IPR053905">
    <property type="entry name" value="EF-G-like_DII"/>
</dbReference>
<dbReference type="InterPro" id="IPR004161">
    <property type="entry name" value="EFTu-like_2"/>
</dbReference>
<dbReference type="InterPro" id="IPR013575">
    <property type="entry name" value="IF2_assoc_dom_bac"/>
</dbReference>
<dbReference type="InterPro" id="IPR044145">
    <property type="entry name" value="IF2_II"/>
</dbReference>
<dbReference type="InterPro" id="IPR006847">
    <property type="entry name" value="IF2_N"/>
</dbReference>
<dbReference type="InterPro" id="IPR027417">
    <property type="entry name" value="P-loop_NTPase"/>
</dbReference>
<dbReference type="InterPro" id="IPR005225">
    <property type="entry name" value="Small_GTP-bd"/>
</dbReference>
<dbReference type="InterPro" id="IPR000795">
    <property type="entry name" value="T_Tr_GTP-bd_dom"/>
</dbReference>
<dbReference type="InterPro" id="IPR000178">
    <property type="entry name" value="TF_IF2_bacterial-like"/>
</dbReference>
<dbReference type="InterPro" id="IPR015760">
    <property type="entry name" value="TIF_IF2"/>
</dbReference>
<dbReference type="InterPro" id="IPR023115">
    <property type="entry name" value="TIF_IF2_dom3"/>
</dbReference>
<dbReference type="InterPro" id="IPR036925">
    <property type="entry name" value="TIF_IF2_dom3_sf"/>
</dbReference>
<dbReference type="InterPro" id="IPR009000">
    <property type="entry name" value="Transl_B-barrel_sf"/>
</dbReference>
<dbReference type="NCBIfam" id="TIGR00487">
    <property type="entry name" value="IF-2"/>
    <property type="match status" value="1"/>
</dbReference>
<dbReference type="NCBIfam" id="TIGR00231">
    <property type="entry name" value="small_GTP"/>
    <property type="match status" value="1"/>
</dbReference>
<dbReference type="PANTHER" id="PTHR43381:SF5">
    <property type="entry name" value="TR-TYPE G DOMAIN-CONTAINING PROTEIN"/>
    <property type="match status" value="1"/>
</dbReference>
<dbReference type="PANTHER" id="PTHR43381">
    <property type="entry name" value="TRANSLATION INITIATION FACTOR IF-2-RELATED"/>
    <property type="match status" value="1"/>
</dbReference>
<dbReference type="Pfam" id="PF22042">
    <property type="entry name" value="EF-G_D2"/>
    <property type="match status" value="1"/>
</dbReference>
<dbReference type="Pfam" id="PF00009">
    <property type="entry name" value="GTP_EFTU"/>
    <property type="match status" value="1"/>
</dbReference>
<dbReference type="Pfam" id="PF03144">
    <property type="entry name" value="GTP_EFTU_D2"/>
    <property type="match status" value="1"/>
</dbReference>
<dbReference type="Pfam" id="PF11987">
    <property type="entry name" value="IF-2"/>
    <property type="match status" value="1"/>
</dbReference>
<dbReference type="Pfam" id="PF08364">
    <property type="entry name" value="IF2_assoc"/>
    <property type="match status" value="1"/>
</dbReference>
<dbReference type="Pfam" id="PF04760">
    <property type="entry name" value="IF2_N"/>
    <property type="match status" value="2"/>
</dbReference>
<dbReference type="SUPFAM" id="SSF52156">
    <property type="entry name" value="Initiation factor IF2/eIF5b, domain 3"/>
    <property type="match status" value="1"/>
</dbReference>
<dbReference type="SUPFAM" id="SSF52540">
    <property type="entry name" value="P-loop containing nucleoside triphosphate hydrolases"/>
    <property type="match status" value="1"/>
</dbReference>
<dbReference type="SUPFAM" id="SSF46955">
    <property type="entry name" value="Putative DNA-binding domain"/>
    <property type="match status" value="1"/>
</dbReference>
<dbReference type="SUPFAM" id="SSF50447">
    <property type="entry name" value="Translation proteins"/>
    <property type="match status" value="2"/>
</dbReference>
<dbReference type="PROSITE" id="PS51722">
    <property type="entry name" value="G_TR_2"/>
    <property type="match status" value="1"/>
</dbReference>
<dbReference type="PROSITE" id="PS01176">
    <property type="entry name" value="IF2"/>
    <property type="match status" value="1"/>
</dbReference>
<sequence>MTDVTVKSLAAEIQTPVDRLVQQFADAGIKKSDVDSVTQQEKEILLAHLNREHGSVPNKLTLQRKTRSTLNIPSTGGKSKSVQIEVRKKRTYVNTPEAEQAKAEEQAQREAEEQAQREAEATAQKIAEEKAKREAEEQAKREAAEKAKRQAAEKEKVTNQQTDEKTKPAQTDKARREAEAAELKRSVEEETRRKVEEDAKRVAEEARKMAAENEGKWPEPVAEQTESADYHVTTSQHARAAEDENDAKVEGDRRSRTRGGKATKQKKGNKLSESKADREEARAVGRKGKRKPSTLQQSFNKPVVAVNRDVVIGETVTVAELANKMAVKGSQVIKAMMKLGAMATINQVIDQETAQLVAEEMGHKVILRRENELEEALMSDRDIGVEAAAEHRAPVVTIMGHVDHGKTSLLDYIRSTKVASGEAGGITQHIGAYHVETENGMITFLDTPGHAAFTSMRARGAQATDIVVLVVAADDGVMPQTIEAIQHAKAANVPVVVAVNKIDKPEADPDRVKTELSQYGIQPEEWGGESQFINVSAKAGIGIDELLNAILLQAEVLELKAVRTGMANGVVIESFLDKGRGPVATVLVQQGTLNKGDIVLCGFEYGRVRAMRDELGRDITSAGPSIPVEILGLSSVPAAGDEVTVVRDEKKAREVALYRQGKFREVKLARQQKSKLENMFANMTEGEVSELNIVIKSDVQGSCEAICDSLEKLSTDEVKVRIVGSGVGGITETDATLAAASGAIILGFNVRADASARRVVETEGLDLRYYSVIYSLIDEVKQAMSGMLAPEYKQQIIGLAEVRDVFKSPKFGAIAGCMVTEGVIKRNNPIRVLRDNVVIYEGELESLRRFKDDVSEVRNGMECGIGVKNYNDVRTGDVIEVFEIIEIKRTIA</sequence>
<protein>
    <recommendedName>
        <fullName evidence="2">Translation initiation factor IF-2</fullName>
    </recommendedName>
</protein>
<feature type="chain" id="PRO_0000228264" description="Translation initiation factor IF-2">
    <location>
        <begin position="1"/>
        <end position="892"/>
    </location>
</feature>
<feature type="domain" description="tr-type G">
    <location>
        <begin position="391"/>
        <end position="560"/>
    </location>
</feature>
<feature type="region of interest" description="Disordered" evidence="3">
    <location>
        <begin position="65"/>
        <end position="296"/>
    </location>
</feature>
<feature type="region of interest" description="G1" evidence="1">
    <location>
        <begin position="400"/>
        <end position="407"/>
    </location>
</feature>
<feature type="region of interest" description="G2" evidence="1">
    <location>
        <begin position="425"/>
        <end position="429"/>
    </location>
</feature>
<feature type="region of interest" description="G3" evidence="1">
    <location>
        <begin position="446"/>
        <end position="449"/>
    </location>
</feature>
<feature type="region of interest" description="G4" evidence="1">
    <location>
        <begin position="500"/>
        <end position="503"/>
    </location>
</feature>
<feature type="region of interest" description="G5" evidence="1">
    <location>
        <begin position="536"/>
        <end position="538"/>
    </location>
</feature>
<feature type="compositionally biased region" description="Polar residues" evidence="3">
    <location>
        <begin position="68"/>
        <end position="82"/>
    </location>
</feature>
<feature type="compositionally biased region" description="Basic and acidic residues" evidence="3">
    <location>
        <begin position="99"/>
        <end position="217"/>
    </location>
</feature>
<feature type="compositionally biased region" description="Polar residues" evidence="3">
    <location>
        <begin position="224"/>
        <end position="237"/>
    </location>
</feature>
<feature type="compositionally biased region" description="Basic and acidic residues" evidence="3">
    <location>
        <begin position="239"/>
        <end position="254"/>
    </location>
</feature>
<feature type="compositionally biased region" description="Basic residues" evidence="3">
    <location>
        <begin position="255"/>
        <end position="269"/>
    </location>
</feature>
<feature type="compositionally biased region" description="Basic and acidic residues" evidence="3">
    <location>
        <begin position="270"/>
        <end position="283"/>
    </location>
</feature>
<feature type="binding site" evidence="2">
    <location>
        <begin position="400"/>
        <end position="407"/>
    </location>
    <ligand>
        <name>GTP</name>
        <dbReference type="ChEBI" id="CHEBI:37565"/>
    </ligand>
</feature>
<feature type="binding site" evidence="2">
    <location>
        <begin position="446"/>
        <end position="450"/>
    </location>
    <ligand>
        <name>GTP</name>
        <dbReference type="ChEBI" id="CHEBI:37565"/>
    </ligand>
</feature>
<feature type="binding site" evidence="2">
    <location>
        <begin position="500"/>
        <end position="503"/>
    </location>
    <ligand>
        <name>GTP</name>
        <dbReference type="ChEBI" id="CHEBI:37565"/>
    </ligand>
</feature>
<accession>Q66F60</accession>
<proteinExistence type="inferred from homology"/>
<organism>
    <name type="scientific">Yersinia pseudotuberculosis serotype I (strain IP32953)</name>
    <dbReference type="NCBI Taxonomy" id="273123"/>
    <lineage>
        <taxon>Bacteria</taxon>
        <taxon>Pseudomonadati</taxon>
        <taxon>Pseudomonadota</taxon>
        <taxon>Gammaproteobacteria</taxon>
        <taxon>Enterobacterales</taxon>
        <taxon>Yersiniaceae</taxon>
        <taxon>Yersinia</taxon>
    </lineage>
</organism>
<name>IF2_YERPS</name>
<comment type="function">
    <text evidence="2">One of the essential components for the initiation of protein synthesis. Protects formylmethionyl-tRNA from spontaneous hydrolysis and promotes its binding to the 30S ribosomal subunits. Also involved in the hydrolysis of GTP during the formation of the 70S ribosomal complex.</text>
</comment>
<comment type="subcellular location">
    <subcellularLocation>
        <location evidence="2">Cytoplasm</location>
    </subcellularLocation>
</comment>
<comment type="similarity">
    <text evidence="2">Belongs to the TRAFAC class translation factor GTPase superfamily. Classic translation factor GTPase family. IF-2 subfamily.</text>
</comment>
<reference key="1">
    <citation type="journal article" date="2004" name="Proc. Natl. Acad. Sci. U.S.A.">
        <title>Insights into the evolution of Yersinia pestis through whole-genome comparison with Yersinia pseudotuberculosis.</title>
        <authorList>
            <person name="Chain P.S.G."/>
            <person name="Carniel E."/>
            <person name="Larimer F.W."/>
            <person name="Lamerdin J."/>
            <person name="Stoutland P.O."/>
            <person name="Regala W.M."/>
            <person name="Georgescu A.M."/>
            <person name="Vergez L.M."/>
            <person name="Land M.L."/>
            <person name="Motin V.L."/>
            <person name="Brubaker R.R."/>
            <person name="Fowler J."/>
            <person name="Hinnebusch J."/>
            <person name="Marceau M."/>
            <person name="Medigue C."/>
            <person name="Simonet M."/>
            <person name="Chenal-Francisque V."/>
            <person name="Souza B."/>
            <person name="Dacheux D."/>
            <person name="Elliott J.M."/>
            <person name="Derbise A."/>
            <person name="Hauser L.J."/>
            <person name="Garcia E."/>
        </authorList>
    </citation>
    <scope>NUCLEOTIDE SEQUENCE [LARGE SCALE GENOMIC DNA]</scope>
    <source>
        <strain>IP32953</strain>
    </source>
</reference>
<keyword id="KW-0963">Cytoplasm</keyword>
<keyword id="KW-0342">GTP-binding</keyword>
<keyword id="KW-0396">Initiation factor</keyword>
<keyword id="KW-0547">Nucleotide-binding</keyword>
<keyword id="KW-0648">Protein biosynthesis</keyword>